<keyword id="KW-0020">Allergen</keyword>
<keyword id="KW-0106">Calcium</keyword>
<keyword id="KW-0479">Metal-binding</keyword>
<keyword id="KW-0677">Repeat</keyword>
<protein>
    <recommendedName>
        <fullName>Polcalcin Aln g 4</fullName>
    </recommendedName>
    <alternativeName>
        <fullName>Calcium-binding pollen allergen Aln g 4</fullName>
    </alternativeName>
    <allergenName>Aln g 4</allergenName>
</protein>
<accession>O81701</accession>
<name>POLC4_ALNGL</name>
<dbReference type="EMBL" id="Y17713">
    <property type="protein sequence ID" value="CAA76831.1"/>
    <property type="molecule type" value="mRNA"/>
</dbReference>
<dbReference type="RefSeq" id="XP_062150743.1">
    <property type="nucleotide sequence ID" value="XM_062294759.1"/>
</dbReference>
<dbReference type="SMR" id="O81701"/>
<dbReference type="Allergome" id="3056">
    <property type="allergen name" value="Aln g 4.0101"/>
</dbReference>
<dbReference type="Allergome" id="9">
    <property type="allergen name" value="Aln g 4"/>
</dbReference>
<dbReference type="GeneID" id="133859370"/>
<dbReference type="GO" id="GO:0005509">
    <property type="term" value="F:calcium ion binding"/>
    <property type="evidence" value="ECO:0007669"/>
    <property type="project" value="InterPro"/>
</dbReference>
<dbReference type="CDD" id="cd00051">
    <property type="entry name" value="EFh"/>
    <property type="match status" value="1"/>
</dbReference>
<dbReference type="FunFam" id="1.10.238.10:FF:000178">
    <property type="entry name" value="Calmodulin-2 A"/>
    <property type="match status" value="1"/>
</dbReference>
<dbReference type="Gene3D" id="1.10.238.10">
    <property type="entry name" value="EF-hand"/>
    <property type="match status" value="1"/>
</dbReference>
<dbReference type="InterPro" id="IPR011992">
    <property type="entry name" value="EF-hand-dom_pair"/>
</dbReference>
<dbReference type="InterPro" id="IPR018247">
    <property type="entry name" value="EF_Hand_1_Ca_BS"/>
</dbReference>
<dbReference type="InterPro" id="IPR002048">
    <property type="entry name" value="EF_hand_dom"/>
</dbReference>
<dbReference type="InterPro" id="IPR039647">
    <property type="entry name" value="EF_hand_pair_protein_CML-like"/>
</dbReference>
<dbReference type="PANTHER" id="PTHR10891">
    <property type="entry name" value="EF-HAND CALCIUM-BINDING DOMAIN CONTAINING PROTEIN"/>
    <property type="match status" value="1"/>
</dbReference>
<dbReference type="Pfam" id="PF13499">
    <property type="entry name" value="EF-hand_7"/>
    <property type="match status" value="1"/>
</dbReference>
<dbReference type="SMART" id="SM00054">
    <property type="entry name" value="EFh"/>
    <property type="match status" value="2"/>
</dbReference>
<dbReference type="SUPFAM" id="SSF47473">
    <property type="entry name" value="EF-hand"/>
    <property type="match status" value="1"/>
</dbReference>
<dbReference type="PROSITE" id="PS00018">
    <property type="entry name" value="EF_HAND_1"/>
    <property type="match status" value="2"/>
</dbReference>
<dbReference type="PROSITE" id="PS50222">
    <property type="entry name" value="EF_HAND_2"/>
    <property type="match status" value="2"/>
</dbReference>
<sequence length="85" mass="9362">MADDHPQDQAEHERIFKCFDANGDGKISASELGDALKTLGSVTPDEVKHMMAEIDTDGDGFISFQEFTNFARANRGLVKDVAKIF</sequence>
<proteinExistence type="evidence at protein level"/>
<reference key="1">
    <citation type="journal article" date="1998" name="J. Immunol.">
        <title>Molecular and immunologic characterization of a highly cross-reactive two EF-hand calcium-binding alder pollen allergen, Aln g 4: structural basis for calcium-modulated IgE recognition.</title>
        <authorList>
            <person name="Hayek B."/>
            <person name="Vangelista L."/>
            <person name="Pastore A."/>
            <person name="Sperr W.R."/>
            <person name="Valent P."/>
            <person name="Vrtala S."/>
            <person name="Niederberger V."/>
            <person name="Twardosz A."/>
            <person name="Kraft D."/>
            <person name="Valenta R."/>
        </authorList>
    </citation>
    <scope>NUCLEOTIDE SEQUENCE [MRNA]</scope>
    <scope>CHARACTERIZATION</scope>
    <scope>MASS SPECTROMETRY</scope>
    <source>
        <tissue>Pollen</tissue>
    </source>
</reference>
<organism>
    <name type="scientific">Alnus glutinosa</name>
    <name type="common">European alder</name>
    <name type="synonym">Betula alnus var. glutinosa</name>
    <dbReference type="NCBI Taxonomy" id="3517"/>
    <lineage>
        <taxon>Eukaryota</taxon>
        <taxon>Viridiplantae</taxon>
        <taxon>Streptophyta</taxon>
        <taxon>Embryophyta</taxon>
        <taxon>Tracheophyta</taxon>
        <taxon>Spermatophyta</taxon>
        <taxon>Magnoliopsida</taxon>
        <taxon>eudicotyledons</taxon>
        <taxon>Gunneridae</taxon>
        <taxon>Pentapetalae</taxon>
        <taxon>rosids</taxon>
        <taxon>fabids</taxon>
        <taxon>Fagales</taxon>
        <taxon>Betulaceae</taxon>
        <taxon>Alnus</taxon>
    </lineage>
</organism>
<feature type="chain" id="PRO_0000073663" description="Polcalcin Aln g 4">
    <location>
        <begin position="1"/>
        <end position="85"/>
    </location>
</feature>
<feature type="domain" description="EF-hand 1" evidence="1">
    <location>
        <begin position="7"/>
        <end position="42"/>
    </location>
</feature>
<feature type="domain" description="EF-hand 2" evidence="1">
    <location>
        <begin position="45"/>
        <end position="77"/>
    </location>
</feature>
<feature type="binding site" evidence="1">
    <location>
        <position position="20"/>
    </location>
    <ligand>
        <name>Ca(2+)</name>
        <dbReference type="ChEBI" id="CHEBI:29108"/>
        <label>1</label>
    </ligand>
</feature>
<feature type="binding site" evidence="1">
    <location>
        <position position="22"/>
    </location>
    <ligand>
        <name>Ca(2+)</name>
        <dbReference type="ChEBI" id="CHEBI:29108"/>
        <label>1</label>
    </ligand>
</feature>
<feature type="binding site" evidence="1">
    <location>
        <position position="24"/>
    </location>
    <ligand>
        <name>Ca(2+)</name>
        <dbReference type="ChEBI" id="CHEBI:29108"/>
        <label>1</label>
    </ligand>
</feature>
<feature type="binding site" evidence="1">
    <location>
        <position position="26"/>
    </location>
    <ligand>
        <name>Ca(2+)</name>
        <dbReference type="ChEBI" id="CHEBI:29108"/>
        <label>1</label>
    </ligand>
</feature>
<feature type="binding site" evidence="1">
    <location>
        <position position="31"/>
    </location>
    <ligand>
        <name>Ca(2+)</name>
        <dbReference type="ChEBI" id="CHEBI:29108"/>
        <label>1</label>
    </ligand>
</feature>
<feature type="binding site" evidence="1">
    <location>
        <position position="55"/>
    </location>
    <ligand>
        <name>Ca(2+)</name>
        <dbReference type="ChEBI" id="CHEBI:29108"/>
        <label>2</label>
    </ligand>
</feature>
<feature type="binding site" evidence="1">
    <location>
        <position position="57"/>
    </location>
    <ligand>
        <name>Ca(2+)</name>
        <dbReference type="ChEBI" id="CHEBI:29108"/>
        <label>2</label>
    </ligand>
</feature>
<feature type="binding site" evidence="1">
    <location>
        <position position="59"/>
    </location>
    <ligand>
        <name>Ca(2+)</name>
        <dbReference type="ChEBI" id="CHEBI:29108"/>
        <label>2</label>
    </ligand>
</feature>
<feature type="binding site" evidence="1">
    <location>
        <position position="66"/>
    </location>
    <ligand>
        <name>Ca(2+)</name>
        <dbReference type="ChEBI" id="CHEBI:29108"/>
        <label>2</label>
    </ligand>
</feature>
<evidence type="ECO:0000255" key="1">
    <source>
        <dbReference type="PROSITE-ProRule" id="PRU00448"/>
    </source>
</evidence>
<evidence type="ECO:0000269" key="2">
    <source>
    </source>
</evidence>
<comment type="mass spectrometry" mass="9318.6" method="MALDI" evidence="2"/>
<comment type="allergen">
    <text>Causes an allergic reaction in human.</text>
</comment>